<keyword id="KW-0131">Cell cycle</keyword>
<keyword id="KW-0132">Cell division</keyword>
<keyword id="KW-0143">Chaperone</keyword>
<keyword id="KW-0963">Cytoplasm</keyword>
<keyword id="KW-0413">Isomerase</keyword>
<keyword id="KW-1185">Reference proteome</keyword>
<keyword id="KW-0697">Rotamase</keyword>
<protein>
    <recommendedName>
        <fullName evidence="1">Trigger factor</fullName>
        <shortName evidence="1">TF</shortName>
        <ecNumber evidence="1">5.2.1.8</ecNumber>
    </recommendedName>
    <alternativeName>
        <fullName evidence="1">PPIase</fullName>
    </alternativeName>
</protein>
<gene>
    <name evidence="1" type="primary">tig</name>
    <name type="ordered locus">Amet_1066</name>
</gene>
<organism>
    <name type="scientific">Alkaliphilus metalliredigens (strain QYMF)</name>
    <dbReference type="NCBI Taxonomy" id="293826"/>
    <lineage>
        <taxon>Bacteria</taxon>
        <taxon>Bacillati</taxon>
        <taxon>Bacillota</taxon>
        <taxon>Clostridia</taxon>
        <taxon>Peptostreptococcales</taxon>
        <taxon>Natronincolaceae</taxon>
        <taxon>Alkaliphilus</taxon>
    </lineage>
</organism>
<sequence length="428" mass="49025">MSAEIMKKEDNKITLKIVVGADQFEVAINKAYNKMKSSFNIPGFRKGKVPRKLVEQRYGVEVFFEDAMNIVLPDAYEGALQELNIDPIDRPEFDFGEIKKGEDVEFTAEVQVMPEFTVEGYKGIEVEKNEYNVQEEDVQNELNKLTEQNARMIAVEDRPVQDGDMVVIDYKGFVGEDQFEGGTAEKQSLTIGSNQFIPGFEEQLIGASIGDEIKVKVTFPEEYHSEELAGKEATFEVMVHEIKEKELPALDDEFAKDVSEFDTLAELKADLSTKLEESAKKRTEQEYRNNVIEAVANQVELEIPNAVIERQINNMLLDFDYQLKYQGMTLESYYQMTGTKEEDLRGQMREDAEKRAKQQLVLDRISEMEKIEATETDVSEELERMATQYKQELDKLKSNLRDQDYTSIKEGIIVRKTIDLLAENAKVS</sequence>
<dbReference type="EC" id="5.2.1.8" evidence="1"/>
<dbReference type="EMBL" id="CP000724">
    <property type="protein sequence ID" value="ABR47278.1"/>
    <property type="molecule type" value="Genomic_DNA"/>
</dbReference>
<dbReference type="RefSeq" id="WP_012062320.1">
    <property type="nucleotide sequence ID" value="NC_009633.1"/>
</dbReference>
<dbReference type="SMR" id="A6TM60"/>
<dbReference type="STRING" id="293826.Amet_1066"/>
<dbReference type="KEGG" id="amt:Amet_1066"/>
<dbReference type="eggNOG" id="COG0544">
    <property type="taxonomic scope" value="Bacteria"/>
</dbReference>
<dbReference type="HOGENOM" id="CLU_033058_3_2_9"/>
<dbReference type="OrthoDB" id="9767721at2"/>
<dbReference type="Proteomes" id="UP000001572">
    <property type="component" value="Chromosome"/>
</dbReference>
<dbReference type="GO" id="GO:0005737">
    <property type="term" value="C:cytoplasm"/>
    <property type="evidence" value="ECO:0007669"/>
    <property type="project" value="UniProtKB-SubCell"/>
</dbReference>
<dbReference type="GO" id="GO:0003755">
    <property type="term" value="F:peptidyl-prolyl cis-trans isomerase activity"/>
    <property type="evidence" value="ECO:0007669"/>
    <property type="project" value="UniProtKB-UniRule"/>
</dbReference>
<dbReference type="GO" id="GO:0044183">
    <property type="term" value="F:protein folding chaperone"/>
    <property type="evidence" value="ECO:0007669"/>
    <property type="project" value="TreeGrafter"/>
</dbReference>
<dbReference type="GO" id="GO:0043022">
    <property type="term" value="F:ribosome binding"/>
    <property type="evidence" value="ECO:0007669"/>
    <property type="project" value="TreeGrafter"/>
</dbReference>
<dbReference type="GO" id="GO:0051083">
    <property type="term" value="P:'de novo' cotranslational protein folding"/>
    <property type="evidence" value="ECO:0007669"/>
    <property type="project" value="TreeGrafter"/>
</dbReference>
<dbReference type="GO" id="GO:0051301">
    <property type="term" value="P:cell division"/>
    <property type="evidence" value="ECO:0007669"/>
    <property type="project" value="UniProtKB-KW"/>
</dbReference>
<dbReference type="GO" id="GO:0061077">
    <property type="term" value="P:chaperone-mediated protein folding"/>
    <property type="evidence" value="ECO:0007669"/>
    <property type="project" value="TreeGrafter"/>
</dbReference>
<dbReference type="GO" id="GO:0015031">
    <property type="term" value="P:protein transport"/>
    <property type="evidence" value="ECO:0007669"/>
    <property type="project" value="UniProtKB-UniRule"/>
</dbReference>
<dbReference type="GO" id="GO:0043335">
    <property type="term" value="P:protein unfolding"/>
    <property type="evidence" value="ECO:0007669"/>
    <property type="project" value="TreeGrafter"/>
</dbReference>
<dbReference type="FunFam" id="3.10.50.40:FF:000001">
    <property type="entry name" value="Trigger factor"/>
    <property type="match status" value="1"/>
</dbReference>
<dbReference type="Gene3D" id="3.10.50.40">
    <property type="match status" value="1"/>
</dbReference>
<dbReference type="Gene3D" id="3.30.70.1050">
    <property type="entry name" value="Trigger factor ribosome-binding domain"/>
    <property type="match status" value="1"/>
</dbReference>
<dbReference type="Gene3D" id="1.10.3120.10">
    <property type="entry name" value="Trigger factor, C-terminal domain"/>
    <property type="match status" value="1"/>
</dbReference>
<dbReference type="HAMAP" id="MF_00303">
    <property type="entry name" value="Trigger_factor_Tig"/>
    <property type="match status" value="1"/>
</dbReference>
<dbReference type="InterPro" id="IPR046357">
    <property type="entry name" value="PPIase_dom_sf"/>
</dbReference>
<dbReference type="InterPro" id="IPR001179">
    <property type="entry name" value="PPIase_FKBP_dom"/>
</dbReference>
<dbReference type="InterPro" id="IPR005215">
    <property type="entry name" value="Trig_fac"/>
</dbReference>
<dbReference type="InterPro" id="IPR008880">
    <property type="entry name" value="Trigger_fac_C"/>
</dbReference>
<dbReference type="InterPro" id="IPR037041">
    <property type="entry name" value="Trigger_fac_C_sf"/>
</dbReference>
<dbReference type="InterPro" id="IPR008881">
    <property type="entry name" value="Trigger_fac_ribosome-bd_bac"/>
</dbReference>
<dbReference type="InterPro" id="IPR036611">
    <property type="entry name" value="Trigger_fac_ribosome-bd_sf"/>
</dbReference>
<dbReference type="InterPro" id="IPR027304">
    <property type="entry name" value="Trigger_fact/SurA_dom_sf"/>
</dbReference>
<dbReference type="NCBIfam" id="TIGR00115">
    <property type="entry name" value="tig"/>
    <property type="match status" value="1"/>
</dbReference>
<dbReference type="PANTHER" id="PTHR30560">
    <property type="entry name" value="TRIGGER FACTOR CHAPERONE AND PEPTIDYL-PROLYL CIS/TRANS ISOMERASE"/>
    <property type="match status" value="1"/>
</dbReference>
<dbReference type="PANTHER" id="PTHR30560:SF3">
    <property type="entry name" value="TRIGGER FACTOR-LIKE PROTEIN TIG, CHLOROPLASTIC"/>
    <property type="match status" value="1"/>
</dbReference>
<dbReference type="Pfam" id="PF00254">
    <property type="entry name" value="FKBP_C"/>
    <property type="match status" value="1"/>
</dbReference>
<dbReference type="Pfam" id="PF05698">
    <property type="entry name" value="Trigger_C"/>
    <property type="match status" value="1"/>
</dbReference>
<dbReference type="Pfam" id="PF05697">
    <property type="entry name" value="Trigger_N"/>
    <property type="match status" value="1"/>
</dbReference>
<dbReference type="PIRSF" id="PIRSF003095">
    <property type="entry name" value="Trigger_factor"/>
    <property type="match status" value="1"/>
</dbReference>
<dbReference type="SUPFAM" id="SSF54534">
    <property type="entry name" value="FKBP-like"/>
    <property type="match status" value="1"/>
</dbReference>
<dbReference type="SUPFAM" id="SSF109998">
    <property type="entry name" value="Triger factor/SurA peptide-binding domain-like"/>
    <property type="match status" value="1"/>
</dbReference>
<dbReference type="SUPFAM" id="SSF102735">
    <property type="entry name" value="Trigger factor ribosome-binding domain"/>
    <property type="match status" value="1"/>
</dbReference>
<dbReference type="PROSITE" id="PS50059">
    <property type="entry name" value="FKBP_PPIASE"/>
    <property type="match status" value="1"/>
</dbReference>
<accession>A6TM60</accession>
<feature type="chain" id="PRO_1000059321" description="Trigger factor">
    <location>
        <begin position="1"/>
        <end position="428"/>
    </location>
</feature>
<feature type="domain" description="PPIase FKBP-type" evidence="1">
    <location>
        <begin position="163"/>
        <end position="248"/>
    </location>
</feature>
<comment type="function">
    <text evidence="1">Involved in protein export. Acts as a chaperone by maintaining the newly synthesized protein in an open conformation. Functions as a peptidyl-prolyl cis-trans isomerase.</text>
</comment>
<comment type="catalytic activity">
    <reaction evidence="1">
        <text>[protein]-peptidylproline (omega=180) = [protein]-peptidylproline (omega=0)</text>
        <dbReference type="Rhea" id="RHEA:16237"/>
        <dbReference type="Rhea" id="RHEA-COMP:10747"/>
        <dbReference type="Rhea" id="RHEA-COMP:10748"/>
        <dbReference type="ChEBI" id="CHEBI:83833"/>
        <dbReference type="ChEBI" id="CHEBI:83834"/>
        <dbReference type="EC" id="5.2.1.8"/>
    </reaction>
</comment>
<comment type="subcellular location">
    <subcellularLocation>
        <location>Cytoplasm</location>
    </subcellularLocation>
    <text evidence="1">About half TF is bound to the ribosome near the polypeptide exit tunnel while the other half is free in the cytoplasm.</text>
</comment>
<comment type="domain">
    <text evidence="1">Consists of 3 domains; the N-terminus binds the ribosome, the middle domain has PPIase activity, while the C-terminus has intrinsic chaperone activity on its own.</text>
</comment>
<comment type="similarity">
    <text evidence="1">Belongs to the FKBP-type PPIase family. Tig subfamily.</text>
</comment>
<evidence type="ECO:0000255" key="1">
    <source>
        <dbReference type="HAMAP-Rule" id="MF_00303"/>
    </source>
</evidence>
<proteinExistence type="inferred from homology"/>
<reference key="1">
    <citation type="journal article" date="2016" name="Genome Announc.">
        <title>Complete genome sequence of Alkaliphilus metalliredigens strain QYMF, an alkaliphilic and metal-reducing bacterium isolated from borax-contaminated leachate ponds.</title>
        <authorList>
            <person name="Hwang C."/>
            <person name="Copeland A."/>
            <person name="Lucas S."/>
            <person name="Lapidus A."/>
            <person name="Barry K."/>
            <person name="Detter J.C."/>
            <person name="Glavina Del Rio T."/>
            <person name="Hammon N."/>
            <person name="Israni S."/>
            <person name="Dalin E."/>
            <person name="Tice H."/>
            <person name="Pitluck S."/>
            <person name="Chertkov O."/>
            <person name="Brettin T."/>
            <person name="Bruce D."/>
            <person name="Han C."/>
            <person name="Schmutz J."/>
            <person name="Larimer F."/>
            <person name="Land M.L."/>
            <person name="Hauser L."/>
            <person name="Kyrpides N."/>
            <person name="Mikhailova N."/>
            <person name="Ye Q."/>
            <person name="Zhou J."/>
            <person name="Richardson P."/>
            <person name="Fields M.W."/>
        </authorList>
    </citation>
    <scope>NUCLEOTIDE SEQUENCE [LARGE SCALE GENOMIC DNA]</scope>
    <source>
        <strain>QYMF</strain>
    </source>
</reference>
<name>TIG_ALKMQ</name>